<comment type="function">
    <text>Guanine nucleotide-binding proteins (G proteins) are involved as a modulator or transducer in various transmembrane signaling systems. This major G-protein of the squid photoreceptor is involved in visual transduction. The beta and gamma chains are required for the GTPase activity, for replacement of GDP by GTP, and for G protein-effector interaction.</text>
</comment>
<comment type="subunit">
    <text>G proteins are composed of 3 units, alpha, beta and gamma.</text>
</comment>
<comment type="subcellular location">
    <subcellularLocation>
        <location evidence="2">Cell membrane</location>
        <topology evidence="2">Lipid-anchor</topology>
        <orientation evidence="2">Cytoplasmic side</orientation>
    </subcellularLocation>
</comment>
<comment type="PTM">
    <text>The N-terminus is blocked.</text>
</comment>
<comment type="similarity">
    <text evidence="2">Belongs to the G protein gamma family.</text>
</comment>
<accession>Q01821</accession>
<name>GBG_LOLFO</name>
<proteinExistence type="evidence at protein level"/>
<keyword id="KW-1003">Cell membrane</keyword>
<keyword id="KW-0903">Direct protein sequencing</keyword>
<keyword id="KW-0449">Lipoprotein</keyword>
<keyword id="KW-0472">Membrane</keyword>
<keyword id="KW-0488">Methylation</keyword>
<keyword id="KW-0636">Prenylation</keyword>
<keyword id="KW-0716">Sensory transduction</keyword>
<keyword id="KW-0807">Transducer</keyword>
<keyword id="KW-0844">Vision</keyword>
<dbReference type="EMBL" id="Z15112">
    <property type="protein sequence ID" value="CAA78816.1"/>
    <property type="molecule type" value="mRNA"/>
</dbReference>
<dbReference type="PIR" id="S27275">
    <property type="entry name" value="S27275"/>
</dbReference>
<dbReference type="GO" id="GO:0005886">
    <property type="term" value="C:plasma membrane"/>
    <property type="evidence" value="ECO:0007669"/>
    <property type="project" value="UniProtKB-SubCell"/>
</dbReference>
<dbReference type="GO" id="GO:0007165">
    <property type="term" value="P:signal transduction"/>
    <property type="evidence" value="ECO:0007669"/>
    <property type="project" value="UniProtKB-KW"/>
</dbReference>
<dbReference type="GO" id="GO:0007601">
    <property type="term" value="P:visual perception"/>
    <property type="evidence" value="ECO:0007669"/>
    <property type="project" value="UniProtKB-KW"/>
</dbReference>
<sequence>MNKMQGKKKKKEEEEEEERIIPPELWKLIIEQYKRQLAKTDVMKVSETVKLHEEKIKEKVPTDHIIHAQKPNAWVEETKKSGGCLLV</sequence>
<evidence type="ECO:0000250" key="1"/>
<evidence type="ECO:0000305" key="2"/>
<reference key="1">
    <citation type="journal article" date="1992" name="FEBS Lett.">
        <title>The gamma-subunit of the principal G-protein from squid (Loligo forbesi) photoreceptors contains a novel N-terminal sequence.</title>
        <authorList>
            <person name="Lott J.S."/>
            <person name="Ryba N.J.P."/>
            <person name="Pottinger J.D.D."/>
            <person name="Keen J.N."/>
            <person name="Carne A."/>
            <person name="Findlay J.B.C."/>
        </authorList>
    </citation>
    <scope>NUCLEOTIDE SEQUENCE [MRNA]</scope>
    <scope>PARTIAL PROTEIN SEQUENCE</scope>
    <source>
        <tissue>Retina</tissue>
    </source>
</reference>
<reference key="2">
    <citation type="journal article" date="1991" name="Biochem. J.">
        <title>The identification and purification of the heterotrimeric GTP-binding protein from squid (Loligo forbesi) photoreceptors.</title>
        <authorList>
            <person name="Pottinger J.D.D."/>
            <person name="Ryba N.J.P."/>
            <person name="Keen J.N."/>
            <person name="Findlay J.B.C."/>
        </authorList>
    </citation>
    <scope>PRELIMINARY PROTEIN SEQUENCE OF 28-72</scope>
</reference>
<organism>
    <name type="scientific">Loligo forbesii</name>
    <name type="common">Veined squid</name>
    <dbReference type="NCBI Taxonomy" id="6618"/>
    <lineage>
        <taxon>Eukaryota</taxon>
        <taxon>Metazoa</taxon>
        <taxon>Spiralia</taxon>
        <taxon>Lophotrochozoa</taxon>
        <taxon>Mollusca</taxon>
        <taxon>Cephalopoda</taxon>
        <taxon>Coleoidea</taxon>
        <taxon>Decapodiformes</taxon>
        <taxon>Myopsida</taxon>
        <taxon>Loliginidae</taxon>
        <taxon>Loligo</taxon>
    </lineage>
</organism>
<protein>
    <recommendedName>
        <fullName>Guanine nucleotide-binding protein subunit gamma</fullName>
    </recommendedName>
</protein>
<feature type="chain" id="PRO_0000012683" description="Guanine nucleotide-binding protein subunit gamma">
    <location>
        <begin position="1"/>
        <end position="84"/>
    </location>
</feature>
<feature type="propeptide" id="PRO_0000012684" description="Removed in mature form" evidence="1">
    <location>
        <begin position="85"/>
        <end position="87"/>
    </location>
</feature>
<feature type="modified residue" description="Cysteine methyl ester" evidence="1">
    <location>
        <position position="84"/>
    </location>
</feature>
<feature type="lipid moiety-binding region" description="S-geranylgeranyl cysteine" evidence="1">
    <location>
        <position position="84"/>
    </location>
</feature>